<proteinExistence type="inferred from homology"/>
<sequence>MSQANAHEQALALSAAMLAIDDVILLATTGQCPERDLSALLPSLLRQNQARLEDYFLEIAPFEKGRALLVNFLINGVSSEHVRYLIQVTVLEEKLSANRALFAQLLQRLNEAESAAEHFPLLHDAMIARFADIYQASVSPAMRKILIHGNPDYLKQPQIAARVRVCLLCAVRAVGLWRAYGGSKWQVIFFRKRFLKALRALRF</sequence>
<dbReference type="EMBL" id="CP000513">
    <property type="protein sequence ID" value="ABQ13972.1"/>
    <property type="molecule type" value="Genomic_DNA"/>
</dbReference>
<dbReference type="RefSeq" id="WP_012030961.1">
    <property type="nucleotide sequence ID" value="NC_009446.1"/>
</dbReference>
<dbReference type="SMR" id="A5EVB5"/>
<dbReference type="STRING" id="246195.DNO_0629"/>
<dbReference type="KEGG" id="dno:DNO_0629"/>
<dbReference type="eggNOG" id="COG2915">
    <property type="taxonomic scope" value="Bacteria"/>
</dbReference>
<dbReference type="HOGENOM" id="CLU_098920_0_0_6"/>
<dbReference type="OrthoDB" id="9788031at2"/>
<dbReference type="Proteomes" id="UP000000248">
    <property type="component" value="Chromosome"/>
</dbReference>
<dbReference type="GO" id="GO:0005737">
    <property type="term" value="C:cytoplasm"/>
    <property type="evidence" value="ECO:0007669"/>
    <property type="project" value="UniProtKB-SubCell"/>
</dbReference>
<dbReference type="GO" id="GO:0005886">
    <property type="term" value="C:plasma membrane"/>
    <property type="evidence" value="ECO:0007669"/>
    <property type="project" value="UniProtKB-SubCell"/>
</dbReference>
<dbReference type="Gene3D" id="1.10.3890.10">
    <property type="entry name" value="HflD-like"/>
    <property type="match status" value="1"/>
</dbReference>
<dbReference type="HAMAP" id="MF_00695">
    <property type="entry name" value="HflD_protein"/>
    <property type="match status" value="1"/>
</dbReference>
<dbReference type="InterPro" id="IPR007451">
    <property type="entry name" value="HflD"/>
</dbReference>
<dbReference type="InterPro" id="IPR035932">
    <property type="entry name" value="HflD-like_sf"/>
</dbReference>
<dbReference type="NCBIfam" id="NF001246">
    <property type="entry name" value="PRK00218.1-2"/>
    <property type="match status" value="1"/>
</dbReference>
<dbReference type="PANTHER" id="PTHR38100">
    <property type="entry name" value="HIGH FREQUENCY LYSOGENIZATION PROTEIN HFLD"/>
    <property type="match status" value="1"/>
</dbReference>
<dbReference type="PANTHER" id="PTHR38100:SF1">
    <property type="entry name" value="HIGH FREQUENCY LYSOGENIZATION PROTEIN HFLD"/>
    <property type="match status" value="1"/>
</dbReference>
<dbReference type="Pfam" id="PF04356">
    <property type="entry name" value="DUF489"/>
    <property type="match status" value="1"/>
</dbReference>
<dbReference type="SUPFAM" id="SSF101322">
    <property type="entry name" value="YcfC-like"/>
    <property type="match status" value="1"/>
</dbReference>
<reference key="1">
    <citation type="journal article" date="2007" name="Nat. Biotechnol.">
        <title>Genome sequence and identification of candidate vaccine antigens from the animal pathogen Dichelobacter nodosus.</title>
        <authorList>
            <person name="Myers G.S.A."/>
            <person name="Parker D."/>
            <person name="Al-Hasani K."/>
            <person name="Kennan R.M."/>
            <person name="Seemann T."/>
            <person name="Ren Q."/>
            <person name="Badger J.H."/>
            <person name="Selengut J.D."/>
            <person name="Deboy R.T."/>
            <person name="Tettelin H."/>
            <person name="Boyce J.D."/>
            <person name="McCarl V.P."/>
            <person name="Han X."/>
            <person name="Nelson W.C."/>
            <person name="Madupu R."/>
            <person name="Mohamoud Y."/>
            <person name="Holley T."/>
            <person name="Fedorova N."/>
            <person name="Khouri H."/>
            <person name="Bottomley S.P."/>
            <person name="Whittington R.J."/>
            <person name="Adler B."/>
            <person name="Songer J.G."/>
            <person name="Rood J.I."/>
            <person name="Paulsen I.T."/>
        </authorList>
    </citation>
    <scope>NUCLEOTIDE SEQUENCE [LARGE SCALE GENOMIC DNA]</scope>
    <source>
        <strain>VCS1703A</strain>
    </source>
</reference>
<gene>
    <name evidence="1" type="primary">hflD</name>
    <name type="ordered locus">DNO_0629</name>
</gene>
<evidence type="ECO:0000255" key="1">
    <source>
        <dbReference type="HAMAP-Rule" id="MF_00695"/>
    </source>
</evidence>
<comment type="subcellular location">
    <subcellularLocation>
        <location>Cytoplasm</location>
    </subcellularLocation>
    <subcellularLocation>
        <location evidence="1">Cell inner membrane</location>
        <topology evidence="1">Peripheral membrane protein</topology>
        <orientation evidence="1">Cytoplasmic side</orientation>
    </subcellularLocation>
</comment>
<comment type="similarity">
    <text evidence="1">Belongs to the HflD family.</text>
</comment>
<accession>A5EVB5</accession>
<keyword id="KW-0997">Cell inner membrane</keyword>
<keyword id="KW-1003">Cell membrane</keyword>
<keyword id="KW-0963">Cytoplasm</keyword>
<keyword id="KW-0472">Membrane</keyword>
<keyword id="KW-1185">Reference proteome</keyword>
<feature type="chain" id="PRO_0000390638" description="High frequency lysogenization protein HflD homolog">
    <location>
        <begin position="1"/>
        <end position="203"/>
    </location>
</feature>
<name>HFLD_DICNV</name>
<protein>
    <recommendedName>
        <fullName evidence="1">High frequency lysogenization protein HflD homolog</fullName>
    </recommendedName>
</protein>
<organism>
    <name type="scientific">Dichelobacter nodosus (strain VCS1703A)</name>
    <dbReference type="NCBI Taxonomy" id="246195"/>
    <lineage>
        <taxon>Bacteria</taxon>
        <taxon>Pseudomonadati</taxon>
        <taxon>Pseudomonadota</taxon>
        <taxon>Gammaproteobacteria</taxon>
        <taxon>Cardiobacteriales</taxon>
        <taxon>Cardiobacteriaceae</taxon>
        <taxon>Dichelobacter</taxon>
    </lineage>
</organism>